<accession>Q977X3</accession>
<reference key="1">
    <citation type="journal article" date="1998" name="J. Ferment. Bioeng.">
        <title>Phylogenetic analysis and effect of heat on conformational change of ferredoxin from hyperthermophilic archaeon Pyrococcus sp. KOD1.</title>
        <authorList>
            <person name="Siddiqui M.A."/>
            <person name="Fujiwara S."/>
            <person name="Takagi M."/>
            <person name="Imanaka T."/>
        </authorList>
    </citation>
    <scope>NUCLEOTIDE SEQUENCE [GENOMIC DNA]</scope>
    <source>
        <strain>ATCC BAA-918 / JCM 12380 / KOD1</strain>
    </source>
</reference>
<reference key="2">
    <citation type="journal article" date="2005" name="Genome Res.">
        <title>Complete genome sequence of the hyperthermophilic archaeon Thermococcus kodakaraensis KOD1 and comparison with Pyrococcus genomes.</title>
        <authorList>
            <person name="Fukui T."/>
            <person name="Atomi H."/>
            <person name="Kanai T."/>
            <person name="Matsumi R."/>
            <person name="Fujiwara S."/>
            <person name="Imanaka T."/>
        </authorList>
    </citation>
    <scope>NUCLEOTIDE SEQUENCE [LARGE SCALE GENOMIC DNA]</scope>
    <source>
        <strain>ATCC BAA-918 / JCM 12380 / KOD1</strain>
    </source>
</reference>
<organism>
    <name type="scientific">Thermococcus kodakarensis (strain ATCC BAA-918 / JCM 12380 / KOD1)</name>
    <name type="common">Pyrococcus kodakaraensis (strain KOD1)</name>
    <dbReference type="NCBI Taxonomy" id="69014"/>
    <lineage>
        <taxon>Archaea</taxon>
        <taxon>Methanobacteriati</taxon>
        <taxon>Methanobacteriota</taxon>
        <taxon>Thermococci</taxon>
        <taxon>Thermococcales</taxon>
        <taxon>Thermococcaceae</taxon>
        <taxon>Thermococcus</taxon>
    </lineage>
</organism>
<feature type="initiator methionine" description="Removed" evidence="1">
    <location>
        <position position="1"/>
    </location>
</feature>
<feature type="chain" id="PRO_0000159200" description="Ferredoxin">
    <location>
        <begin position="2"/>
        <end position="63"/>
    </location>
</feature>
<feature type="domain" description="4Fe-4S ferredoxin-type" evidence="2">
    <location>
        <begin position="3"/>
        <end position="31"/>
    </location>
</feature>
<feature type="binding site" evidence="1">
    <location>
        <position position="12"/>
    </location>
    <ligand>
        <name>[4Fe-4S] cluster</name>
        <dbReference type="ChEBI" id="CHEBI:49883"/>
    </ligand>
</feature>
<feature type="binding site" evidence="1">
    <location>
        <position position="15"/>
    </location>
    <ligand>
        <name>[4Fe-4S] cluster</name>
        <dbReference type="ChEBI" id="CHEBI:49883"/>
    </ligand>
</feature>
<feature type="binding site" evidence="1">
    <location>
        <position position="18"/>
    </location>
    <ligand>
        <name>[4Fe-4S] cluster</name>
        <dbReference type="ChEBI" id="CHEBI:49883"/>
    </ligand>
</feature>
<feature type="binding site" evidence="1">
    <location>
        <position position="53"/>
    </location>
    <ligand>
        <name>[4Fe-4S] cluster</name>
        <dbReference type="ChEBI" id="CHEBI:49883"/>
    </ligand>
</feature>
<feature type="disulfide bond" evidence="1">
    <location>
        <begin position="22"/>
        <end position="45"/>
    </location>
</feature>
<sequence>MAWKVSVDVDTCIGDAICASLCPDVFEMGDDGKAHPVVETTDLDCAQEAAEACPVGAITLEEA</sequence>
<keyword id="KW-0003">3Fe-4S</keyword>
<keyword id="KW-0004">4Fe-4S</keyword>
<keyword id="KW-1015">Disulfide bond</keyword>
<keyword id="KW-0249">Electron transport</keyword>
<keyword id="KW-0408">Iron</keyword>
<keyword id="KW-0411">Iron-sulfur</keyword>
<keyword id="KW-0479">Metal-binding</keyword>
<keyword id="KW-1185">Reference proteome</keyword>
<keyword id="KW-0677">Repeat</keyword>
<keyword id="KW-0813">Transport</keyword>
<dbReference type="EMBL" id="AB006194">
    <property type="protein sequence ID" value="BAB60808.1"/>
    <property type="molecule type" value="Genomic_DNA"/>
</dbReference>
<dbReference type="EMBL" id="AP006878">
    <property type="protein sequence ID" value="BAD85883.1"/>
    <property type="molecule type" value="Genomic_DNA"/>
</dbReference>
<dbReference type="RefSeq" id="WP_011250645.1">
    <property type="nucleotide sequence ID" value="NC_006624.1"/>
</dbReference>
<dbReference type="SMR" id="Q977X3"/>
<dbReference type="STRING" id="69014.TK1694"/>
<dbReference type="EnsemblBacteria" id="BAD85883">
    <property type="protein sequence ID" value="BAD85883"/>
    <property type="gene ID" value="TK1694"/>
</dbReference>
<dbReference type="GeneID" id="78448223"/>
<dbReference type="KEGG" id="tko:TK1694"/>
<dbReference type="PATRIC" id="fig|69014.16.peg.1652"/>
<dbReference type="eggNOG" id="arCOG00349">
    <property type="taxonomic scope" value="Archaea"/>
</dbReference>
<dbReference type="HOGENOM" id="CLU_139698_6_4_2"/>
<dbReference type="InParanoid" id="Q977X3"/>
<dbReference type="OrthoDB" id="5583at2157"/>
<dbReference type="PhylomeDB" id="Q977X3"/>
<dbReference type="Proteomes" id="UP000000536">
    <property type="component" value="Chromosome"/>
</dbReference>
<dbReference type="GO" id="GO:0051538">
    <property type="term" value="F:3 iron, 4 sulfur cluster binding"/>
    <property type="evidence" value="ECO:0007669"/>
    <property type="project" value="UniProtKB-KW"/>
</dbReference>
<dbReference type="GO" id="GO:0051539">
    <property type="term" value="F:4 iron, 4 sulfur cluster binding"/>
    <property type="evidence" value="ECO:0007669"/>
    <property type="project" value="UniProtKB-KW"/>
</dbReference>
<dbReference type="GO" id="GO:0009055">
    <property type="term" value="F:electron transfer activity"/>
    <property type="evidence" value="ECO:0007669"/>
    <property type="project" value="InterPro"/>
</dbReference>
<dbReference type="GO" id="GO:0005506">
    <property type="term" value="F:iron ion binding"/>
    <property type="evidence" value="ECO:0007669"/>
    <property type="project" value="InterPro"/>
</dbReference>
<dbReference type="Gene3D" id="3.30.70.20">
    <property type="match status" value="1"/>
</dbReference>
<dbReference type="InterPro" id="IPR001080">
    <property type="entry name" value="3Fe4S_ferredoxin"/>
</dbReference>
<dbReference type="InterPro" id="IPR017896">
    <property type="entry name" value="4Fe4S_Fe-S-bd"/>
</dbReference>
<dbReference type="InterPro" id="IPR051269">
    <property type="entry name" value="Fe-S_cluster_ET"/>
</dbReference>
<dbReference type="PANTHER" id="PTHR36923">
    <property type="entry name" value="FERREDOXIN"/>
    <property type="match status" value="1"/>
</dbReference>
<dbReference type="PANTHER" id="PTHR36923:SF3">
    <property type="entry name" value="FERREDOXIN"/>
    <property type="match status" value="1"/>
</dbReference>
<dbReference type="Pfam" id="PF13370">
    <property type="entry name" value="Fer4_13"/>
    <property type="match status" value="1"/>
</dbReference>
<dbReference type="PRINTS" id="PR00352">
    <property type="entry name" value="3FE4SFRDOXIN"/>
</dbReference>
<dbReference type="SUPFAM" id="SSF54862">
    <property type="entry name" value="4Fe-4S ferredoxins"/>
    <property type="match status" value="1"/>
</dbReference>
<dbReference type="PROSITE" id="PS51379">
    <property type="entry name" value="4FE4S_FER_2"/>
    <property type="match status" value="1"/>
</dbReference>
<name>FER_THEKO</name>
<comment type="function">
    <text evidence="1">Ferredoxins are iron-sulfur proteins that transfer electrons in a wide variety of metabolic reactions.</text>
</comment>
<comment type="cofactor">
    <cofactor evidence="1">
        <name>[4Fe-4S] cluster</name>
        <dbReference type="ChEBI" id="CHEBI:49883"/>
    </cofactor>
    <cofactor evidence="1">
        <name>[3Fe-4S] cluster</name>
        <dbReference type="ChEBI" id="CHEBI:21137"/>
    </cofactor>
    <text evidence="1">Binds 1 [4Fe-4S] cluster which readily converts to a stable [3Fe-4S] form.</text>
</comment>
<evidence type="ECO:0000250" key="1"/>
<evidence type="ECO:0000255" key="2">
    <source>
        <dbReference type="PROSITE-ProRule" id="PRU00711"/>
    </source>
</evidence>
<gene>
    <name type="primary">fdxA</name>
    <name type="ordered locus">TK1694</name>
</gene>
<proteinExistence type="inferred from homology"/>
<protein>
    <recommendedName>
        <fullName>Ferredoxin</fullName>
    </recommendedName>
</protein>